<name>ODPX_CHATD</name>
<organism>
    <name type="scientific">Chaetomium thermophilum (strain DSM 1495 / CBS 144.50 / IMI 039719)</name>
    <name type="common">Thermochaetoides thermophila</name>
    <dbReference type="NCBI Taxonomy" id="759272"/>
    <lineage>
        <taxon>Eukaryota</taxon>
        <taxon>Fungi</taxon>
        <taxon>Dikarya</taxon>
        <taxon>Ascomycota</taxon>
        <taxon>Pezizomycotina</taxon>
        <taxon>Sordariomycetes</taxon>
        <taxon>Sordariomycetidae</taxon>
        <taxon>Sordariales</taxon>
        <taxon>Chaetomiaceae</taxon>
        <taxon>Thermochaetoides</taxon>
    </lineage>
</organism>
<proteinExistence type="evidence at protein level"/>
<protein>
    <recommendedName>
        <fullName evidence="7">Pyruvate dehydrogenase complex protein X component, mitochondrial</fullName>
    </recommendedName>
    <alternativeName>
        <fullName evidence="7">Dihydrolipoamide dehydrogenase-binding protein of pyruvate dehydrogenase complex</fullName>
    </alternativeName>
    <alternativeName>
        <fullName evidence="7">E3-binding protein</fullName>
    </alternativeName>
    <alternativeName>
        <fullName evidence="7">Pyruvate dehydrogenase complex component E3BP</fullName>
    </alternativeName>
</protein>
<accession>G0S5Q0</accession>
<reference key="1">
    <citation type="journal article" date="2011" name="Cell">
        <title>Insight into structure and assembly of the nuclear pore complex by utilizing the genome of a eukaryotic thermophile.</title>
        <authorList>
            <person name="Amlacher S."/>
            <person name="Sarges P."/>
            <person name="Flemming D."/>
            <person name="van Noort V."/>
            <person name="Kunze R."/>
            <person name="Devos D.P."/>
            <person name="Arumugam M."/>
            <person name="Bork P."/>
            <person name="Hurt E."/>
        </authorList>
    </citation>
    <scope>NUCLEOTIDE SEQUENCE [LARGE SCALE GENOMIC DNA]</scope>
    <source>
        <strain>DSM 1495 / CBS 144.50 / IMI 039719</strain>
    </source>
</reference>
<reference key="2">
    <citation type="journal article" date="2021" name="Cell Rep.">
        <title>Integrative structure of a 10-megadalton eukaryotic pyruvate dehydrogenase complex from native cell extracts.</title>
        <authorList>
            <person name="Kyrilis F.L."/>
            <person name="Semchonok D.A."/>
            <person name="Skalidis I."/>
            <person name="Tueting C."/>
            <person name="Hamdi F."/>
            <person name="O'Reilly F.J."/>
            <person name="Rappsilber J."/>
            <person name="Kastritis P.L."/>
        </authorList>
    </citation>
    <scope>FUNCTION</scope>
    <scope>SUBUNIT</scope>
</reference>
<reference key="3">
    <citation type="journal article" date="2021" name="Nat. Commun.">
        <title>Cryo-EM snapshots of a native lysate provide structural insights into a metabolon-embedded transacetylase reaction.</title>
        <authorList>
            <person name="Tueting C."/>
            <person name="Kyrilis F.L."/>
            <person name="Mueller J."/>
            <person name="Sorokina M."/>
            <person name="Skalidis I."/>
            <person name="Hamdi F."/>
            <person name="Sadian Y."/>
            <person name="Kastritis P.L."/>
        </authorList>
    </citation>
    <scope>FUNCTION</scope>
    <scope>SUBUNIT</scope>
    <scope>DOMAIN</scope>
</reference>
<comment type="function">
    <text evidence="5 6 9">The 10-megadalton pyruvate dehydrogenase complex contains multiple copies of three enzymatic components: pyruvate dehydrogenase (E1), dihydrolipoamide acetyltransferase (E2) and lipoamide dehydrogenase (E3) and catalyzes the overall oxidative decarboxylation of pyruvate to form acetyl-CoA and CO(2) (PubMed:33567276, PubMed:34836937). E3BP is responsible for tethering E3 in proximity to the core, forming the entire metabolon, and the number of E3s is limited by the number of E3BPs (PubMed:34836937). Within the complex, pyruvate and thiamine pyrophosphate (TPP or vitamin B1) are bound by pyruvate dehydrogenase E1 subunits alpha and beta and pyruvate is decarboxylated leading to the 2-carbon hydrohyethyl bound to TPP. The E2 component contains covalently-bound lipoyl cofactors and transfers the hydroxyethyl group from TPP to an oxidized form of covalently bound lipoamide, and the resulting acetyl group is then transferred to free coenzyme A to form acetyl-CoA and reduced dihydrolipoamide-E2. Finally, the flavoprotein dihydrolipoamide dehydrogenase (E3) re-oxidizes the lipoyl group of dihydrolipoamide-E2 to form lipoamide-E2 and NADH. A fourth subunit, E3BP, is responsible for tethering E3 in proximity to the core, forming the entire metabolon (Probable).</text>
</comment>
<comment type="subunit">
    <text evidence="5">Eukaryotic pyruvate dehydrogenase (PDH) complexes are organized as a core consisting of the oligomeric dihydrolipoamide acetyl-transferase (E2), around which are arranged multiple copies of pyruvate dehydrogenase (E1), dihydrolipoamide dehydrogenase (E3) and protein X (E3BP) bound by non-covalent bonds (PubMed:33567276). The Chaetomium thermophilum PDH complex contains 60 E2 units, 12 E3BP units, about 20 E1 units, and 12 or more E3 units (PubMed:33567276). The units are organized in 1 E2 60-mer, 4 E3BP trimers, about 20 E1 tetramers, and a maximum of 12 E3 dimers (PubMed:33567276). The E3BP trimers are bound inside the icosahedral core with tetrahedral symmetry (PubMed:33567276).</text>
</comment>
<comment type="subcellular location">
    <subcellularLocation>
        <location evidence="1">Mitochondrion</location>
    </subcellularLocation>
</comment>
<comment type="domain">
    <text evidence="6">The sequence organization of E3BP is highly similar to E2, having an N-terminal lipoyl-binding domain (LD), a central peripheral subunit binding domain (PSBD), and the C-terminal core region connected by disordered linkers.</text>
</comment>
<comment type="domain">
    <text evidence="6">E3BP is bound in a tripod-like manner and the interaction to the E2 core is primarily mediated by a loop region of E3BP (residues Pro-317 to Leu-336).</text>
</comment>
<comment type="similarity">
    <text evidence="8">Belongs to the 2-oxoacid dehydrogenase family.</text>
</comment>
<feature type="transit peptide" description="Mitochondrion" evidence="1">
    <location>
        <begin position="1"/>
        <end position="35"/>
    </location>
</feature>
<feature type="chain" id="PRO_0000456223" description="Pyruvate dehydrogenase complex protein X component, mitochondrial" evidence="1">
    <location>
        <begin position="36"/>
        <end position="442"/>
    </location>
</feature>
<feature type="domain" description="Lipoyl-binding" evidence="2">
    <location>
        <begin position="37"/>
        <end position="113"/>
    </location>
</feature>
<feature type="domain" description="Peripheral subunit-binding (PSBD)" evidence="3">
    <location>
        <begin position="175"/>
        <end position="215"/>
    </location>
</feature>
<feature type="region of interest" description="Disordered" evidence="4">
    <location>
        <begin position="119"/>
        <end position="169"/>
    </location>
</feature>
<feature type="region of interest" description="Disordered" evidence="4">
    <location>
        <begin position="244"/>
        <end position="269"/>
    </location>
</feature>
<feature type="region of interest" description="Interaction to the E2 core" evidence="6">
    <location>
        <begin position="317"/>
        <end position="336"/>
    </location>
</feature>
<feature type="compositionally biased region" description="Pro residues" evidence="4">
    <location>
        <begin position="139"/>
        <end position="151"/>
    </location>
</feature>
<feature type="compositionally biased region" description="Low complexity" evidence="4">
    <location>
        <begin position="152"/>
        <end position="169"/>
    </location>
</feature>
<feature type="compositionally biased region" description="Basic and acidic residues" evidence="4">
    <location>
        <begin position="245"/>
        <end position="257"/>
    </location>
</feature>
<feature type="site" description="E2-binding in a hydrophobic pocket in the E2 core" evidence="6">
    <location>
        <position position="330"/>
    </location>
</feature>
<feature type="modified residue" description="N6-lipoyllysine" evidence="2">
    <location>
        <position position="78"/>
    </location>
</feature>
<sequence>MASLAAACRVSARLAARKLQHDAAVRGFRSSAAALAAQNFMMPALSPTMTEGNIASWRVKEGERFSAGDVLLEIETDKATMDVEAQEDGILMKIIQPDGSKGVQVGTRIAVVAEEGDDITKLEIPPDEGPQQLKAAAPAPAPTPAPAPASPQPQFAAPTPSPPKASTKVPARKYPLLPSVHQLIKENGLDESAVSNITPTGPGGRILKGDVLAYLGKINPNTPAQISARFEKASHLDLSNVKVAKPVEPEKPQEEKASAPAPAPRAPEPPAKAVVSLPISLSAVLEAQQRINKKLGIFLPLSTFISRATELANEELPLPTNYQPTADELFDQVLGLDKVPGYVSAAKQRATRGNYVPDIKAPIPPKAAPKPKQKKIDIIDILAAAPKAKSVKPAGPSLVPGAVTEGLNVFSLQVPKTEERRAKVFLERVKHVLENEPGRLVL</sequence>
<keyword id="KW-0450">Lipoyl</keyword>
<keyword id="KW-0496">Mitochondrion</keyword>
<keyword id="KW-0670">Pyruvate</keyword>
<keyword id="KW-1185">Reference proteome</keyword>
<keyword id="KW-0809">Transit peptide</keyword>
<evidence type="ECO:0000255" key="1"/>
<evidence type="ECO:0000255" key="2">
    <source>
        <dbReference type="PROSITE-ProRule" id="PRU01066"/>
    </source>
</evidence>
<evidence type="ECO:0000255" key="3">
    <source>
        <dbReference type="PROSITE-ProRule" id="PRU01170"/>
    </source>
</evidence>
<evidence type="ECO:0000256" key="4">
    <source>
        <dbReference type="SAM" id="MobiDB-lite"/>
    </source>
</evidence>
<evidence type="ECO:0000269" key="5">
    <source>
    </source>
</evidence>
<evidence type="ECO:0000269" key="6">
    <source>
    </source>
</evidence>
<evidence type="ECO:0000303" key="7">
    <source>
    </source>
</evidence>
<evidence type="ECO:0000305" key="8"/>
<evidence type="ECO:0000305" key="9">
    <source>
    </source>
</evidence>
<gene>
    <name type="ORF">CTHT_0025050</name>
</gene>
<dbReference type="EMBL" id="GL988041">
    <property type="protein sequence ID" value="EGS20669.1"/>
    <property type="molecule type" value="Genomic_DNA"/>
</dbReference>
<dbReference type="RefSeq" id="XP_006692965.1">
    <property type="nucleotide sequence ID" value="XM_006692902.1"/>
</dbReference>
<dbReference type="SMR" id="G0S5Q0"/>
<dbReference type="STRING" id="759272.G0S5Q0"/>
<dbReference type="GeneID" id="18256543"/>
<dbReference type="KEGG" id="cthr:CTHT_0025050"/>
<dbReference type="eggNOG" id="KOG0557">
    <property type="taxonomic scope" value="Eukaryota"/>
</dbReference>
<dbReference type="HOGENOM" id="CLU_035825_2_0_1"/>
<dbReference type="OMA" id="DGIMMKI"/>
<dbReference type="OrthoDB" id="202158at2759"/>
<dbReference type="Proteomes" id="UP000008066">
    <property type="component" value="Unassembled WGS sequence"/>
</dbReference>
<dbReference type="GO" id="GO:0005739">
    <property type="term" value="C:mitochondrion"/>
    <property type="evidence" value="ECO:0007669"/>
    <property type="project" value="UniProtKB-SubCell"/>
</dbReference>
<dbReference type="GO" id="GO:0045254">
    <property type="term" value="C:pyruvate dehydrogenase complex"/>
    <property type="evidence" value="ECO:0007669"/>
    <property type="project" value="InterPro"/>
</dbReference>
<dbReference type="GO" id="GO:0004742">
    <property type="term" value="F:dihydrolipoyllysine-residue acetyltransferase activity"/>
    <property type="evidence" value="ECO:0007669"/>
    <property type="project" value="TreeGrafter"/>
</dbReference>
<dbReference type="GO" id="GO:0006086">
    <property type="term" value="P:pyruvate decarboxylation to acetyl-CoA"/>
    <property type="evidence" value="ECO:0007669"/>
    <property type="project" value="InterPro"/>
</dbReference>
<dbReference type="CDD" id="cd06849">
    <property type="entry name" value="lipoyl_domain"/>
    <property type="match status" value="1"/>
</dbReference>
<dbReference type="FunFam" id="2.40.50.100:FF:000010">
    <property type="entry name" value="Acetyltransferase component of pyruvate dehydrogenase complex"/>
    <property type="match status" value="1"/>
</dbReference>
<dbReference type="Gene3D" id="2.40.50.100">
    <property type="match status" value="1"/>
</dbReference>
<dbReference type="Gene3D" id="4.10.320.10">
    <property type="entry name" value="E3-binding domain"/>
    <property type="match status" value="1"/>
</dbReference>
<dbReference type="InterPro" id="IPR003016">
    <property type="entry name" value="2-oxoA_DH_lipoyl-BS"/>
</dbReference>
<dbReference type="InterPro" id="IPR000089">
    <property type="entry name" value="Biotin_lipoyl"/>
</dbReference>
<dbReference type="InterPro" id="IPR045257">
    <property type="entry name" value="E2/Pdx1"/>
</dbReference>
<dbReference type="InterPro" id="IPR036625">
    <property type="entry name" value="E3-bd_dom_sf"/>
</dbReference>
<dbReference type="InterPro" id="IPR004167">
    <property type="entry name" value="PSBD"/>
</dbReference>
<dbReference type="InterPro" id="IPR011053">
    <property type="entry name" value="Single_hybrid_motif"/>
</dbReference>
<dbReference type="PANTHER" id="PTHR23151">
    <property type="entry name" value="DIHYDROLIPOAMIDE ACETYL/SUCCINYL-TRANSFERASE-RELATED"/>
    <property type="match status" value="1"/>
</dbReference>
<dbReference type="PANTHER" id="PTHR23151:SF82">
    <property type="entry name" value="PYRUVATE DEHYDROGENASE COMPLEX PROTEIN X COMPONENT, MITOCHONDRIAL"/>
    <property type="match status" value="1"/>
</dbReference>
<dbReference type="Pfam" id="PF00364">
    <property type="entry name" value="Biotin_lipoyl"/>
    <property type="match status" value="1"/>
</dbReference>
<dbReference type="Pfam" id="PF02817">
    <property type="entry name" value="E3_binding"/>
    <property type="match status" value="1"/>
</dbReference>
<dbReference type="SUPFAM" id="SSF47005">
    <property type="entry name" value="Peripheral subunit-binding domain of 2-oxo acid dehydrogenase complex"/>
    <property type="match status" value="1"/>
</dbReference>
<dbReference type="SUPFAM" id="SSF51230">
    <property type="entry name" value="Single hybrid motif"/>
    <property type="match status" value="1"/>
</dbReference>
<dbReference type="PROSITE" id="PS50968">
    <property type="entry name" value="BIOTINYL_LIPOYL"/>
    <property type="match status" value="1"/>
</dbReference>
<dbReference type="PROSITE" id="PS00189">
    <property type="entry name" value="LIPOYL"/>
    <property type="match status" value="1"/>
</dbReference>
<dbReference type="PROSITE" id="PS51826">
    <property type="entry name" value="PSBD"/>
    <property type="match status" value="1"/>
</dbReference>